<evidence type="ECO:0000255" key="1">
    <source>
        <dbReference type="HAMAP-Rule" id="MF_00446"/>
    </source>
</evidence>
<organism>
    <name type="scientific">Dehalococcoides mccartyi (strain CBDB1)</name>
    <dbReference type="NCBI Taxonomy" id="255470"/>
    <lineage>
        <taxon>Bacteria</taxon>
        <taxon>Bacillati</taxon>
        <taxon>Chloroflexota</taxon>
        <taxon>Dehalococcoidia</taxon>
        <taxon>Dehalococcoidales</taxon>
        <taxon>Dehalococcoidaceae</taxon>
        <taxon>Dehalococcoides</taxon>
    </lineage>
</organism>
<feature type="chain" id="PRO_0000236869" description="Aspartate 1-decarboxylase beta chain" evidence="1">
    <location>
        <begin position="1"/>
        <end position="20"/>
    </location>
</feature>
<feature type="chain" id="PRO_0000236870" description="Aspartate 1-decarboxylase alpha chain" evidence="1">
    <location>
        <begin position="21"/>
        <end position="124"/>
    </location>
</feature>
<feature type="active site" description="Schiff-base intermediate with substrate; via pyruvic acid" evidence="1">
    <location>
        <position position="21"/>
    </location>
</feature>
<feature type="active site" description="Proton donor" evidence="1">
    <location>
        <position position="54"/>
    </location>
</feature>
<feature type="binding site" evidence="1">
    <location>
        <position position="53"/>
    </location>
    <ligand>
        <name>substrate</name>
    </ligand>
</feature>
<feature type="binding site" evidence="1">
    <location>
        <begin position="69"/>
        <end position="71"/>
    </location>
    <ligand>
        <name>substrate</name>
    </ligand>
</feature>
<feature type="modified residue" description="Pyruvic acid (Ser)" evidence="1">
    <location>
        <position position="21"/>
    </location>
</feature>
<dbReference type="EC" id="4.1.1.11" evidence="1"/>
<dbReference type="EMBL" id="AJ965256">
    <property type="protein sequence ID" value="CAI82934.1"/>
    <property type="molecule type" value="Genomic_DNA"/>
</dbReference>
<dbReference type="RefSeq" id="WP_011309285.1">
    <property type="nucleotide sequence ID" value="NC_007356.1"/>
</dbReference>
<dbReference type="SMR" id="Q3ZXG1"/>
<dbReference type="KEGG" id="deh:cbdbA780"/>
<dbReference type="HOGENOM" id="CLU_115305_2_0_0"/>
<dbReference type="UniPathway" id="UPA00028">
    <property type="reaction ID" value="UER00002"/>
</dbReference>
<dbReference type="Proteomes" id="UP000000433">
    <property type="component" value="Chromosome"/>
</dbReference>
<dbReference type="GO" id="GO:0005829">
    <property type="term" value="C:cytosol"/>
    <property type="evidence" value="ECO:0007669"/>
    <property type="project" value="TreeGrafter"/>
</dbReference>
<dbReference type="GO" id="GO:0004068">
    <property type="term" value="F:aspartate 1-decarboxylase activity"/>
    <property type="evidence" value="ECO:0007669"/>
    <property type="project" value="UniProtKB-UniRule"/>
</dbReference>
<dbReference type="GO" id="GO:0006523">
    <property type="term" value="P:alanine biosynthetic process"/>
    <property type="evidence" value="ECO:0007669"/>
    <property type="project" value="InterPro"/>
</dbReference>
<dbReference type="GO" id="GO:0015940">
    <property type="term" value="P:pantothenate biosynthetic process"/>
    <property type="evidence" value="ECO:0007669"/>
    <property type="project" value="UniProtKB-UniRule"/>
</dbReference>
<dbReference type="CDD" id="cd06919">
    <property type="entry name" value="Asp_decarbox"/>
    <property type="match status" value="1"/>
</dbReference>
<dbReference type="Gene3D" id="2.40.40.20">
    <property type="match status" value="1"/>
</dbReference>
<dbReference type="HAMAP" id="MF_00446">
    <property type="entry name" value="PanD"/>
    <property type="match status" value="1"/>
</dbReference>
<dbReference type="InterPro" id="IPR009010">
    <property type="entry name" value="Asp_de-COase-like_dom_sf"/>
</dbReference>
<dbReference type="InterPro" id="IPR003190">
    <property type="entry name" value="Asp_decarbox"/>
</dbReference>
<dbReference type="NCBIfam" id="TIGR00223">
    <property type="entry name" value="panD"/>
    <property type="match status" value="1"/>
</dbReference>
<dbReference type="PANTHER" id="PTHR21012">
    <property type="entry name" value="ASPARTATE 1-DECARBOXYLASE"/>
    <property type="match status" value="1"/>
</dbReference>
<dbReference type="PANTHER" id="PTHR21012:SF0">
    <property type="entry name" value="ASPARTATE 1-DECARBOXYLASE"/>
    <property type="match status" value="1"/>
</dbReference>
<dbReference type="Pfam" id="PF02261">
    <property type="entry name" value="Asp_decarbox"/>
    <property type="match status" value="1"/>
</dbReference>
<dbReference type="PIRSF" id="PIRSF006246">
    <property type="entry name" value="Asp_decarbox"/>
    <property type="match status" value="1"/>
</dbReference>
<dbReference type="SUPFAM" id="SSF50692">
    <property type="entry name" value="ADC-like"/>
    <property type="match status" value="1"/>
</dbReference>
<name>PAND_DEHMC</name>
<comment type="function">
    <text evidence="1">Catalyzes the pyruvoyl-dependent decarboxylation of aspartate to produce beta-alanine.</text>
</comment>
<comment type="catalytic activity">
    <reaction evidence="1">
        <text>L-aspartate + H(+) = beta-alanine + CO2</text>
        <dbReference type="Rhea" id="RHEA:19497"/>
        <dbReference type="ChEBI" id="CHEBI:15378"/>
        <dbReference type="ChEBI" id="CHEBI:16526"/>
        <dbReference type="ChEBI" id="CHEBI:29991"/>
        <dbReference type="ChEBI" id="CHEBI:57966"/>
        <dbReference type="EC" id="4.1.1.11"/>
    </reaction>
</comment>
<comment type="cofactor">
    <cofactor evidence="1">
        <name>pyruvate</name>
        <dbReference type="ChEBI" id="CHEBI:15361"/>
    </cofactor>
    <text evidence="1">Binds 1 pyruvoyl group covalently per subunit.</text>
</comment>
<comment type="pathway">
    <text evidence="1">Cofactor biosynthesis; (R)-pantothenate biosynthesis; beta-alanine from L-aspartate: step 1/1.</text>
</comment>
<comment type="subunit">
    <text evidence="1">Heterooctamer of four alpha and four beta subunits.</text>
</comment>
<comment type="subcellular location">
    <subcellularLocation>
        <location evidence="1">Cytoplasm</location>
    </subcellularLocation>
</comment>
<comment type="PTM">
    <text evidence="1">Is synthesized initially as an inactive proenzyme, which is activated by self-cleavage at a specific serine bond to produce a beta-subunit with a hydroxyl group at its C-terminus and an alpha-subunit with a pyruvoyl group at its N-terminus.</text>
</comment>
<comment type="similarity">
    <text evidence="1">Belongs to the PanD family.</text>
</comment>
<proteinExistence type="inferred from homology"/>
<reference key="1">
    <citation type="journal article" date="2005" name="Nat. Biotechnol.">
        <title>Genome sequence of the chlorinated compound-respiring bacterium Dehalococcoides species strain CBDB1.</title>
        <authorList>
            <person name="Kube M."/>
            <person name="Beck A."/>
            <person name="Zinder S.H."/>
            <person name="Kuhl H."/>
            <person name="Reinhardt R."/>
            <person name="Adrian L."/>
        </authorList>
    </citation>
    <scope>NUCLEOTIDE SEQUENCE [LARGE SCALE GENOMIC DNA]</scope>
    <source>
        <strain>CBDB1</strain>
    </source>
</reference>
<gene>
    <name evidence="1" type="primary">panD</name>
    <name type="ordered locus">cbdbA780</name>
</gene>
<sequence>MLKSKIHRATITDACIDYEGSITIDKNLMQAANLLPYEQVHVVNVNNGTRLETYVIEGSAGSGQICLNGAAARMGMKGDKIIILGYSLITEEDTLIHQPNLVYVDALNRITKVKNGVANQGLEV</sequence>
<keyword id="KW-0068">Autocatalytic cleavage</keyword>
<keyword id="KW-0963">Cytoplasm</keyword>
<keyword id="KW-0210">Decarboxylase</keyword>
<keyword id="KW-0456">Lyase</keyword>
<keyword id="KW-0566">Pantothenate biosynthesis</keyword>
<keyword id="KW-0670">Pyruvate</keyword>
<keyword id="KW-0704">Schiff base</keyword>
<keyword id="KW-0865">Zymogen</keyword>
<accession>Q3ZXG1</accession>
<protein>
    <recommendedName>
        <fullName evidence="1">Aspartate 1-decarboxylase</fullName>
        <ecNumber evidence="1">4.1.1.11</ecNumber>
    </recommendedName>
    <alternativeName>
        <fullName evidence="1">Aspartate alpha-decarboxylase</fullName>
    </alternativeName>
    <component>
        <recommendedName>
            <fullName evidence="1">Aspartate 1-decarboxylase beta chain</fullName>
        </recommendedName>
    </component>
    <component>
        <recommendedName>
            <fullName evidence="1">Aspartate 1-decarboxylase alpha chain</fullName>
        </recommendedName>
    </component>
</protein>